<name>RL1_ACIF5</name>
<organism>
    <name type="scientific">Acidithiobacillus ferrooxidans (strain ATCC 53993 / BNL-5-31)</name>
    <name type="common">Leptospirillum ferrooxidans (ATCC 53993)</name>
    <dbReference type="NCBI Taxonomy" id="380394"/>
    <lineage>
        <taxon>Bacteria</taxon>
        <taxon>Pseudomonadati</taxon>
        <taxon>Pseudomonadota</taxon>
        <taxon>Acidithiobacillia</taxon>
        <taxon>Acidithiobacillales</taxon>
        <taxon>Acidithiobacillaceae</taxon>
        <taxon>Acidithiobacillus</taxon>
    </lineage>
</organism>
<sequence length="230" mass="24290">MATKSKRTLAIRAMVDRNNRYAIEEALELVKKMATTKFDESVDVAVGLGIDPRKSDQVVRGAVVLPHGTGKQMRVAVFATADKATEAREAGADIVGMEDLAELVKAGQMDFDVVIATPDAMRVVGTLGPVLGPRGLMPNPKVGTVTADVRTAVINAKGGQVRYRADKGGIVHSTIGKSSFEVKALQENLLVLIDSLRKAKPATSKGIYIRKVNLSPTMGPGVAVDLSGLG</sequence>
<keyword id="KW-0678">Repressor</keyword>
<keyword id="KW-0687">Ribonucleoprotein</keyword>
<keyword id="KW-0689">Ribosomal protein</keyword>
<keyword id="KW-0694">RNA-binding</keyword>
<keyword id="KW-0699">rRNA-binding</keyword>
<keyword id="KW-0810">Translation regulation</keyword>
<keyword id="KW-0820">tRNA-binding</keyword>
<accession>B5ELW9</accession>
<proteinExistence type="inferred from homology"/>
<feature type="chain" id="PRO_1000141349" description="Large ribosomal subunit protein uL1">
    <location>
        <begin position="1"/>
        <end position="230"/>
    </location>
</feature>
<gene>
    <name evidence="1" type="primary">rplA</name>
    <name type="ordered locus">Lferr_0487</name>
</gene>
<protein>
    <recommendedName>
        <fullName evidence="1">Large ribosomal subunit protein uL1</fullName>
    </recommendedName>
    <alternativeName>
        <fullName evidence="2">50S ribosomal protein L1</fullName>
    </alternativeName>
</protein>
<evidence type="ECO:0000255" key="1">
    <source>
        <dbReference type="HAMAP-Rule" id="MF_01318"/>
    </source>
</evidence>
<evidence type="ECO:0000305" key="2"/>
<dbReference type="EMBL" id="CP001132">
    <property type="protein sequence ID" value="ACH82741.1"/>
    <property type="molecule type" value="Genomic_DNA"/>
</dbReference>
<dbReference type="RefSeq" id="WP_012536081.1">
    <property type="nucleotide sequence ID" value="NC_011206.1"/>
</dbReference>
<dbReference type="SMR" id="B5ELW9"/>
<dbReference type="GeneID" id="65279696"/>
<dbReference type="KEGG" id="afe:Lferr_0487"/>
<dbReference type="eggNOG" id="COG0081">
    <property type="taxonomic scope" value="Bacteria"/>
</dbReference>
<dbReference type="HOGENOM" id="CLU_062853_0_0_6"/>
<dbReference type="GO" id="GO:0022625">
    <property type="term" value="C:cytosolic large ribosomal subunit"/>
    <property type="evidence" value="ECO:0007669"/>
    <property type="project" value="TreeGrafter"/>
</dbReference>
<dbReference type="GO" id="GO:0019843">
    <property type="term" value="F:rRNA binding"/>
    <property type="evidence" value="ECO:0007669"/>
    <property type="project" value="UniProtKB-UniRule"/>
</dbReference>
<dbReference type="GO" id="GO:0003735">
    <property type="term" value="F:structural constituent of ribosome"/>
    <property type="evidence" value="ECO:0007669"/>
    <property type="project" value="InterPro"/>
</dbReference>
<dbReference type="GO" id="GO:0000049">
    <property type="term" value="F:tRNA binding"/>
    <property type="evidence" value="ECO:0007669"/>
    <property type="project" value="UniProtKB-KW"/>
</dbReference>
<dbReference type="GO" id="GO:0006417">
    <property type="term" value="P:regulation of translation"/>
    <property type="evidence" value="ECO:0007669"/>
    <property type="project" value="UniProtKB-KW"/>
</dbReference>
<dbReference type="GO" id="GO:0006412">
    <property type="term" value="P:translation"/>
    <property type="evidence" value="ECO:0007669"/>
    <property type="project" value="UniProtKB-UniRule"/>
</dbReference>
<dbReference type="CDD" id="cd00403">
    <property type="entry name" value="Ribosomal_L1"/>
    <property type="match status" value="1"/>
</dbReference>
<dbReference type="FunFam" id="3.40.50.790:FF:000001">
    <property type="entry name" value="50S ribosomal protein L1"/>
    <property type="match status" value="1"/>
</dbReference>
<dbReference type="Gene3D" id="3.30.190.20">
    <property type="match status" value="1"/>
</dbReference>
<dbReference type="Gene3D" id="3.40.50.790">
    <property type="match status" value="1"/>
</dbReference>
<dbReference type="HAMAP" id="MF_01318_B">
    <property type="entry name" value="Ribosomal_uL1_B"/>
    <property type="match status" value="1"/>
</dbReference>
<dbReference type="InterPro" id="IPR005878">
    <property type="entry name" value="Ribosom_uL1_bac-type"/>
</dbReference>
<dbReference type="InterPro" id="IPR002143">
    <property type="entry name" value="Ribosomal_uL1"/>
</dbReference>
<dbReference type="InterPro" id="IPR023674">
    <property type="entry name" value="Ribosomal_uL1-like"/>
</dbReference>
<dbReference type="InterPro" id="IPR028364">
    <property type="entry name" value="Ribosomal_uL1/biogenesis"/>
</dbReference>
<dbReference type="InterPro" id="IPR016095">
    <property type="entry name" value="Ribosomal_uL1_3-a/b-sand"/>
</dbReference>
<dbReference type="InterPro" id="IPR023673">
    <property type="entry name" value="Ribosomal_uL1_CS"/>
</dbReference>
<dbReference type="NCBIfam" id="TIGR01169">
    <property type="entry name" value="rplA_bact"/>
    <property type="match status" value="1"/>
</dbReference>
<dbReference type="PANTHER" id="PTHR36427">
    <property type="entry name" value="54S RIBOSOMAL PROTEIN L1, MITOCHONDRIAL"/>
    <property type="match status" value="1"/>
</dbReference>
<dbReference type="PANTHER" id="PTHR36427:SF3">
    <property type="entry name" value="LARGE RIBOSOMAL SUBUNIT PROTEIN UL1M"/>
    <property type="match status" value="1"/>
</dbReference>
<dbReference type="Pfam" id="PF00687">
    <property type="entry name" value="Ribosomal_L1"/>
    <property type="match status" value="1"/>
</dbReference>
<dbReference type="PIRSF" id="PIRSF002155">
    <property type="entry name" value="Ribosomal_L1"/>
    <property type="match status" value="1"/>
</dbReference>
<dbReference type="SUPFAM" id="SSF56808">
    <property type="entry name" value="Ribosomal protein L1"/>
    <property type="match status" value="1"/>
</dbReference>
<dbReference type="PROSITE" id="PS01199">
    <property type="entry name" value="RIBOSOMAL_L1"/>
    <property type="match status" value="1"/>
</dbReference>
<comment type="function">
    <text evidence="1">Binds directly to 23S rRNA. The L1 stalk is quite mobile in the ribosome, and is involved in E site tRNA release.</text>
</comment>
<comment type="function">
    <text evidence="1">Protein L1 is also a translational repressor protein, it controls the translation of the L11 operon by binding to its mRNA.</text>
</comment>
<comment type="subunit">
    <text evidence="1">Part of the 50S ribosomal subunit.</text>
</comment>
<comment type="similarity">
    <text evidence="1">Belongs to the universal ribosomal protein uL1 family.</text>
</comment>
<reference key="1">
    <citation type="submission" date="2008-08" db="EMBL/GenBank/DDBJ databases">
        <title>Complete sequence of Acidithiobacillus ferrooxidans ATCC 53993.</title>
        <authorList>
            <person name="Lucas S."/>
            <person name="Copeland A."/>
            <person name="Lapidus A."/>
            <person name="Glavina del Rio T."/>
            <person name="Dalin E."/>
            <person name="Tice H."/>
            <person name="Bruce D."/>
            <person name="Goodwin L."/>
            <person name="Pitluck S."/>
            <person name="Sims D."/>
            <person name="Brettin T."/>
            <person name="Detter J.C."/>
            <person name="Han C."/>
            <person name="Kuske C.R."/>
            <person name="Larimer F."/>
            <person name="Land M."/>
            <person name="Hauser L."/>
            <person name="Kyrpides N."/>
            <person name="Lykidis A."/>
            <person name="Borole A.P."/>
        </authorList>
    </citation>
    <scope>NUCLEOTIDE SEQUENCE [LARGE SCALE GENOMIC DNA]</scope>
    <source>
        <strain>ATCC 53993 / BNL-5-31</strain>
    </source>
</reference>